<sequence>MFKEYKIYKFFEQVKQETYKVVWPTRKELVASTLVVVVAVFIFSLICLVLDYSIHNIMQLLLNIGK</sequence>
<protein>
    <recommendedName>
        <fullName evidence="1">Protein translocase subunit SecE</fullName>
    </recommendedName>
</protein>
<comment type="function">
    <text evidence="1">Essential subunit of the Sec protein translocation channel SecYEG. Clamps together the 2 halves of SecY. May contact the channel plug during translocation.</text>
</comment>
<comment type="subunit">
    <text evidence="1">Component of the Sec protein translocase complex. Heterotrimer consisting of SecY, SecE and SecG subunits. The heterotrimers can form oligomers, although 1 heterotrimer is thought to be able to translocate proteins. Interacts with the ribosome. Interacts with SecDF, and other proteins may be involved. Interacts with SecA.</text>
</comment>
<comment type="subcellular location">
    <subcellularLocation>
        <location evidence="1">Cell inner membrane</location>
        <topology evidence="1">Single-pass membrane protein</topology>
    </subcellularLocation>
</comment>
<comment type="similarity">
    <text evidence="1">Belongs to the SecE/SEC61-gamma family.</text>
</comment>
<reference key="1">
    <citation type="journal article" date="2002" name="Mol. Biol. Evol.">
        <title>Proliferation and deterioration of Rickettsia palindromic elements.</title>
        <authorList>
            <person name="Amiri H."/>
            <person name="Alsmark C.M."/>
            <person name="Andersson S.G.E."/>
        </authorList>
    </citation>
    <scope>NUCLEOTIDE SEQUENCE [GENOMIC DNA]</scope>
    <source>
        <strain>ATCC VR-151 / 246</strain>
    </source>
</reference>
<keyword id="KW-0997">Cell inner membrane</keyword>
<keyword id="KW-1003">Cell membrane</keyword>
<keyword id="KW-0472">Membrane</keyword>
<keyword id="KW-0653">Protein transport</keyword>
<keyword id="KW-0811">Translocation</keyword>
<keyword id="KW-0812">Transmembrane</keyword>
<keyword id="KW-1133">Transmembrane helix</keyword>
<keyword id="KW-0813">Transport</keyword>
<proteinExistence type="inferred from homology"/>
<feature type="chain" id="PRO_0000273144" description="Protein translocase subunit SecE">
    <location>
        <begin position="1"/>
        <end position="66"/>
    </location>
</feature>
<feature type="transmembrane region" description="Helical" evidence="1">
    <location>
        <begin position="29"/>
        <end position="49"/>
    </location>
</feature>
<dbReference type="EMBL" id="AF502172">
    <property type="protein sequence ID" value="AAM90918.1"/>
    <property type="molecule type" value="Genomic_DNA"/>
</dbReference>
<dbReference type="RefSeq" id="WP_004996644.1">
    <property type="nucleotide sequence ID" value="NZ_AABW01000001.1"/>
</dbReference>
<dbReference type="SMR" id="Q7B6T4"/>
<dbReference type="GeneID" id="95361890"/>
<dbReference type="GO" id="GO:0005886">
    <property type="term" value="C:plasma membrane"/>
    <property type="evidence" value="ECO:0007669"/>
    <property type="project" value="UniProtKB-SubCell"/>
</dbReference>
<dbReference type="GO" id="GO:0008320">
    <property type="term" value="F:protein transmembrane transporter activity"/>
    <property type="evidence" value="ECO:0007669"/>
    <property type="project" value="UniProtKB-UniRule"/>
</dbReference>
<dbReference type="GO" id="GO:0065002">
    <property type="term" value="P:intracellular protein transmembrane transport"/>
    <property type="evidence" value="ECO:0007669"/>
    <property type="project" value="UniProtKB-UniRule"/>
</dbReference>
<dbReference type="GO" id="GO:0009306">
    <property type="term" value="P:protein secretion"/>
    <property type="evidence" value="ECO:0007669"/>
    <property type="project" value="UniProtKB-UniRule"/>
</dbReference>
<dbReference type="GO" id="GO:0006605">
    <property type="term" value="P:protein targeting"/>
    <property type="evidence" value="ECO:0007669"/>
    <property type="project" value="UniProtKB-UniRule"/>
</dbReference>
<dbReference type="GO" id="GO:0043952">
    <property type="term" value="P:protein transport by the Sec complex"/>
    <property type="evidence" value="ECO:0007669"/>
    <property type="project" value="UniProtKB-UniRule"/>
</dbReference>
<dbReference type="Gene3D" id="1.20.5.1030">
    <property type="entry name" value="Preprotein translocase secy subunit"/>
    <property type="match status" value="1"/>
</dbReference>
<dbReference type="HAMAP" id="MF_00422">
    <property type="entry name" value="SecE"/>
    <property type="match status" value="1"/>
</dbReference>
<dbReference type="InterPro" id="IPR005807">
    <property type="entry name" value="SecE_bac"/>
</dbReference>
<dbReference type="InterPro" id="IPR038379">
    <property type="entry name" value="SecE_sf"/>
</dbReference>
<dbReference type="InterPro" id="IPR001901">
    <property type="entry name" value="Translocase_SecE/Sec61-g"/>
</dbReference>
<dbReference type="NCBIfam" id="TIGR00964">
    <property type="entry name" value="secE_bact"/>
    <property type="match status" value="1"/>
</dbReference>
<dbReference type="PANTHER" id="PTHR33910">
    <property type="entry name" value="PROTEIN TRANSLOCASE SUBUNIT SECE"/>
    <property type="match status" value="1"/>
</dbReference>
<dbReference type="PANTHER" id="PTHR33910:SF1">
    <property type="entry name" value="PROTEIN TRANSLOCASE SUBUNIT SECE"/>
    <property type="match status" value="1"/>
</dbReference>
<dbReference type="Pfam" id="PF00584">
    <property type="entry name" value="SecE"/>
    <property type="match status" value="1"/>
</dbReference>
<dbReference type="PROSITE" id="PS01067">
    <property type="entry name" value="SECE_SEC61G"/>
    <property type="match status" value="1"/>
</dbReference>
<name>SECE_RICS2</name>
<accession>Q7B6T4</accession>
<gene>
    <name evidence="1" type="primary">secE</name>
</gene>
<organism>
    <name type="scientific">Rickettsia sibirica (strain ATCC VR-151 / 246)</name>
    <dbReference type="NCBI Taxonomy" id="272951"/>
    <lineage>
        <taxon>Bacteria</taxon>
        <taxon>Pseudomonadati</taxon>
        <taxon>Pseudomonadota</taxon>
        <taxon>Alphaproteobacteria</taxon>
        <taxon>Rickettsiales</taxon>
        <taxon>Rickettsiaceae</taxon>
        <taxon>Rickettsieae</taxon>
        <taxon>Rickettsia</taxon>
        <taxon>spotted fever group</taxon>
        <taxon>Rickettsia sibirica subgroup</taxon>
    </lineage>
</organism>
<evidence type="ECO:0000255" key="1">
    <source>
        <dbReference type="HAMAP-Rule" id="MF_00422"/>
    </source>
</evidence>